<dbReference type="EMBL" id="CP000504">
    <property type="protein sequence ID" value="ABL87884.1"/>
    <property type="molecule type" value="Genomic_DNA"/>
</dbReference>
<dbReference type="RefSeq" id="WP_011762460.1">
    <property type="nucleotide sequence ID" value="NC_008701.1"/>
</dbReference>
<dbReference type="SMR" id="A1RSF2"/>
<dbReference type="STRING" id="384616.Pisl_0706"/>
<dbReference type="GeneID" id="4617610"/>
<dbReference type="KEGG" id="pis:Pisl_0706"/>
<dbReference type="eggNOG" id="arCOG00869">
    <property type="taxonomic scope" value="Archaea"/>
</dbReference>
<dbReference type="HOGENOM" id="CLU_1425139_0_0_2"/>
<dbReference type="OrthoDB" id="26028at2157"/>
<dbReference type="Proteomes" id="UP000002595">
    <property type="component" value="Chromosome"/>
</dbReference>
<dbReference type="GO" id="GO:0005886">
    <property type="term" value="C:plasma membrane"/>
    <property type="evidence" value="ECO:0007669"/>
    <property type="project" value="UniProtKB-SubCell"/>
</dbReference>
<dbReference type="GO" id="GO:0033178">
    <property type="term" value="C:proton-transporting two-sector ATPase complex, catalytic domain"/>
    <property type="evidence" value="ECO:0007669"/>
    <property type="project" value="InterPro"/>
</dbReference>
<dbReference type="GO" id="GO:0005524">
    <property type="term" value="F:ATP binding"/>
    <property type="evidence" value="ECO:0007669"/>
    <property type="project" value="UniProtKB-UniRule"/>
</dbReference>
<dbReference type="GO" id="GO:0046933">
    <property type="term" value="F:proton-transporting ATP synthase activity, rotational mechanism"/>
    <property type="evidence" value="ECO:0007669"/>
    <property type="project" value="UniProtKB-UniRule"/>
</dbReference>
<dbReference type="GO" id="GO:0046961">
    <property type="term" value="F:proton-transporting ATPase activity, rotational mechanism"/>
    <property type="evidence" value="ECO:0007669"/>
    <property type="project" value="InterPro"/>
</dbReference>
<dbReference type="GO" id="GO:0042777">
    <property type="term" value="P:proton motive force-driven plasma membrane ATP synthesis"/>
    <property type="evidence" value="ECO:0007669"/>
    <property type="project" value="UniProtKB-UniRule"/>
</dbReference>
<dbReference type="Gene3D" id="3.30.2320.30">
    <property type="entry name" value="ATP synthase, E subunit, C-terminal"/>
    <property type="match status" value="1"/>
</dbReference>
<dbReference type="HAMAP" id="MF_00311">
    <property type="entry name" value="ATP_synth_E_arch"/>
    <property type="match status" value="1"/>
</dbReference>
<dbReference type="InterPro" id="IPR038495">
    <property type="entry name" value="ATPase_E_C"/>
</dbReference>
<dbReference type="InterPro" id="IPR002842">
    <property type="entry name" value="ATPase_V1_Esu"/>
</dbReference>
<dbReference type="Pfam" id="PF01991">
    <property type="entry name" value="vATP-synt_E"/>
    <property type="match status" value="1"/>
</dbReference>
<dbReference type="SUPFAM" id="SSF160527">
    <property type="entry name" value="V-type ATPase subunit E-like"/>
    <property type="match status" value="1"/>
</dbReference>
<name>AATE_PYRIL</name>
<evidence type="ECO:0000255" key="1">
    <source>
        <dbReference type="HAMAP-Rule" id="MF_00311"/>
    </source>
</evidence>
<accession>A1RSF2</accession>
<organism>
    <name type="scientific">Pyrobaculum islandicum (strain DSM 4184 / JCM 9189 / GEO3)</name>
    <dbReference type="NCBI Taxonomy" id="384616"/>
    <lineage>
        <taxon>Archaea</taxon>
        <taxon>Thermoproteota</taxon>
        <taxon>Thermoprotei</taxon>
        <taxon>Thermoproteales</taxon>
        <taxon>Thermoproteaceae</taxon>
        <taxon>Pyrobaculum</taxon>
    </lineage>
</organism>
<protein>
    <recommendedName>
        <fullName evidence="1">A-type ATP synthase subunit E</fullName>
    </recommendedName>
</protein>
<sequence length="190" mass="22050">MSLFEDLINSKIRELEELKSNLLIDIETRIRKEATAVLNKYSTQITNIESEVALERERILYSAIIEARRKIVETYEQILNDFIETIYNEVDKLRGSERYVKFLRFLIESAINYTQTKDVIIYASPKDRGVVETLAKNLGITGFVIEKDIKGGVIVMTRDGSITVDYSLETLLSNKLEELKHLIYLETHER</sequence>
<proteinExistence type="inferred from homology"/>
<reference key="1">
    <citation type="submission" date="2006-12" db="EMBL/GenBank/DDBJ databases">
        <title>Complete sequence of Pyrobaculum islandicum DSM 4184.</title>
        <authorList>
            <person name="Copeland A."/>
            <person name="Lucas S."/>
            <person name="Lapidus A."/>
            <person name="Barry K."/>
            <person name="Detter J.C."/>
            <person name="Glavina del Rio T."/>
            <person name="Dalin E."/>
            <person name="Tice H."/>
            <person name="Pitluck S."/>
            <person name="Meincke L."/>
            <person name="Brettin T."/>
            <person name="Bruce D."/>
            <person name="Han C."/>
            <person name="Tapia R."/>
            <person name="Gilna P."/>
            <person name="Schmutz J."/>
            <person name="Larimer F."/>
            <person name="Land M."/>
            <person name="Hauser L."/>
            <person name="Kyrpides N."/>
            <person name="Mikhailova N."/>
            <person name="Cozen A.E."/>
            <person name="Fitz-Gibbon S.T."/>
            <person name="House C.H."/>
            <person name="Saltikov C."/>
            <person name="Lowe T."/>
            <person name="Richardson P."/>
        </authorList>
    </citation>
    <scope>NUCLEOTIDE SEQUENCE [LARGE SCALE GENOMIC DNA]</scope>
    <source>
        <strain>DSM 4184 / JCM 9189 / GEO3</strain>
    </source>
</reference>
<keyword id="KW-0066">ATP synthesis</keyword>
<keyword id="KW-1003">Cell membrane</keyword>
<keyword id="KW-0375">Hydrogen ion transport</keyword>
<keyword id="KW-0406">Ion transport</keyword>
<keyword id="KW-0472">Membrane</keyword>
<keyword id="KW-0813">Transport</keyword>
<gene>
    <name evidence="1" type="primary">atpE</name>
    <name type="ordered locus">Pisl_0706</name>
</gene>
<feature type="chain" id="PRO_0000322536" description="A-type ATP synthase subunit E">
    <location>
        <begin position="1"/>
        <end position="190"/>
    </location>
</feature>
<comment type="function">
    <text evidence="1">Component of the A-type ATP synthase that produces ATP from ADP in the presence of a proton gradient across the membrane.</text>
</comment>
<comment type="subunit">
    <text evidence="1">Has multiple subunits with at least A(3), B(3), C, D, E, F, H, I and proteolipid K(x).</text>
</comment>
<comment type="subcellular location">
    <subcellularLocation>
        <location evidence="1">Cell membrane</location>
        <topology evidence="1">Peripheral membrane protein</topology>
    </subcellularLocation>
</comment>
<comment type="similarity">
    <text evidence="1">Belongs to the V-ATPase E subunit family.</text>
</comment>